<accession>A4TLA4</accession>
<protein>
    <recommendedName>
        <fullName evidence="1">Flap endonuclease Xni</fullName>
        <shortName evidence="1">FEN</shortName>
        <ecNumber evidence="1">3.1.-.-</ecNumber>
    </recommendedName>
</protein>
<gene>
    <name evidence="1" type="primary">xni</name>
    <name evidence="1" type="synonym">ygdG</name>
    <name type="ordered locus">YPDSF_1681</name>
</gene>
<proteinExistence type="inferred from homology"/>
<organism>
    <name type="scientific">Yersinia pestis (strain Pestoides F)</name>
    <dbReference type="NCBI Taxonomy" id="386656"/>
    <lineage>
        <taxon>Bacteria</taxon>
        <taxon>Pseudomonadati</taxon>
        <taxon>Pseudomonadota</taxon>
        <taxon>Gammaproteobacteria</taxon>
        <taxon>Enterobacterales</taxon>
        <taxon>Yersiniaceae</taxon>
        <taxon>Yersinia</taxon>
    </lineage>
</organism>
<keyword id="KW-0238">DNA-binding</keyword>
<keyword id="KW-0255">Endonuclease</keyword>
<keyword id="KW-0378">Hydrolase</keyword>
<keyword id="KW-0460">Magnesium</keyword>
<keyword id="KW-0479">Metal-binding</keyword>
<keyword id="KW-0540">Nuclease</keyword>
<keyword id="KW-0630">Potassium</keyword>
<sequence>MQIHLLIVDALNLIRRIHAVQGSPCVKACQHALQQLIQHSQPSHAVAVFDEDDRSDSWRHQCLPDYKAGRSPMPDNLQQEMPLIRQAFNELGVACWHSPGNEADDLAATLVVKVAGAGHQVTIVSTDKGYCQLLAPNIQIRDYFQKRWLDMPFVKQEFGVLPRQLPDYWGLAGISSSKIPGVAGVGAKTATLLLQQADTLEVLYQNLESIPEKWRKKLQQHQQMAFTCKQIATLKTDLLLSGNLQQLRLKK</sequence>
<reference key="1">
    <citation type="submission" date="2007-02" db="EMBL/GenBank/DDBJ databases">
        <title>Complete sequence of chromosome of Yersinia pestis Pestoides F.</title>
        <authorList>
            <consortium name="US DOE Joint Genome Institute"/>
            <person name="Copeland A."/>
            <person name="Lucas S."/>
            <person name="Lapidus A."/>
            <person name="Barry K."/>
            <person name="Detter J.C."/>
            <person name="Glavina del Rio T."/>
            <person name="Hammon N."/>
            <person name="Israni S."/>
            <person name="Dalin E."/>
            <person name="Tice H."/>
            <person name="Pitluck S."/>
            <person name="Di Bartolo G."/>
            <person name="Chain P."/>
            <person name="Malfatti S."/>
            <person name="Shin M."/>
            <person name="Vergez L."/>
            <person name="Schmutz J."/>
            <person name="Larimer F."/>
            <person name="Land M."/>
            <person name="Hauser L."/>
            <person name="Worsham P."/>
            <person name="Chu M."/>
            <person name="Bearden S."/>
            <person name="Garcia E."/>
            <person name="Richardson P."/>
        </authorList>
    </citation>
    <scope>NUCLEOTIDE SEQUENCE [LARGE SCALE GENOMIC DNA]</scope>
    <source>
        <strain>Pestoides F</strain>
    </source>
</reference>
<feature type="chain" id="PRO_0000297896" description="Flap endonuclease Xni">
    <location>
        <begin position="1"/>
        <end position="251"/>
    </location>
</feature>
<feature type="domain" description="5'-3' exonuclease" evidence="1">
    <location>
        <begin position="160"/>
        <end position="250"/>
    </location>
</feature>
<feature type="region of interest" description="Interaction with DNA" evidence="1">
    <location>
        <begin position="184"/>
        <end position="189"/>
    </location>
</feature>
<feature type="binding site" evidence="1">
    <location>
        <position position="104"/>
    </location>
    <ligand>
        <name>Mg(2+)</name>
        <dbReference type="ChEBI" id="CHEBI:18420"/>
    </ligand>
</feature>
<feature type="binding site" evidence="1">
    <location>
        <position position="171"/>
    </location>
    <ligand>
        <name>K(+)</name>
        <dbReference type="ChEBI" id="CHEBI:29103"/>
    </ligand>
</feature>
<feature type="binding site" evidence="1">
    <location>
        <position position="172"/>
    </location>
    <ligand>
        <name>K(+)</name>
        <dbReference type="ChEBI" id="CHEBI:29103"/>
    </ligand>
</feature>
<feature type="binding site" evidence="1">
    <location>
        <position position="180"/>
    </location>
    <ligand>
        <name>K(+)</name>
        <dbReference type="ChEBI" id="CHEBI:29103"/>
    </ligand>
</feature>
<feature type="binding site" evidence="1">
    <location>
        <position position="182"/>
    </location>
    <ligand>
        <name>K(+)</name>
        <dbReference type="ChEBI" id="CHEBI:29103"/>
    </ligand>
</feature>
<feature type="binding site" evidence="1">
    <location>
        <position position="185"/>
    </location>
    <ligand>
        <name>K(+)</name>
        <dbReference type="ChEBI" id="CHEBI:29103"/>
    </ligand>
</feature>
<comment type="function">
    <text evidence="1">Has flap endonuclease activity. During DNA replication, flap endonucleases cleave the 5'-overhanging flap structure that is generated by displacement synthesis when DNA polymerase encounters the 5'-end of a downstream Okazaki fragment.</text>
</comment>
<comment type="cofactor">
    <cofactor evidence="1">
        <name>Mg(2+)</name>
        <dbReference type="ChEBI" id="CHEBI:18420"/>
    </cofactor>
    <text evidence="1">Binds 2 Mg(2+) per subunit. Only one magnesium ion has a direct interaction with the protein, the other interactions are indirect.</text>
</comment>
<comment type="cofactor">
    <cofactor evidence="1">
        <name>K(+)</name>
        <dbReference type="ChEBI" id="CHEBI:29103"/>
    </cofactor>
    <text evidence="1">Binds 1 K(+) per subunit. The potassium ion strongly increases the affinity for DNA.</text>
</comment>
<comment type="similarity">
    <text evidence="1">Belongs to the Xni family.</text>
</comment>
<evidence type="ECO:0000255" key="1">
    <source>
        <dbReference type="HAMAP-Rule" id="MF_01192"/>
    </source>
</evidence>
<name>XNI_YERPP</name>
<dbReference type="EC" id="3.1.-.-" evidence="1"/>
<dbReference type="EMBL" id="CP000668">
    <property type="protein sequence ID" value="ABP40066.1"/>
    <property type="molecule type" value="Genomic_DNA"/>
</dbReference>
<dbReference type="RefSeq" id="WP_002215970.1">
    <property type="nucleotide sequence ID" value="NZ_CP009715.1"/>
</dbReference>
<dbReference type="SMR" id="A4TLA4"/>
<dbReference type="GeneID" id="57977529"/>
<dbReference type="KEGG" id="ypp:YPDSF_1681"/>
<dbReference type="PATRIC" id="fig|386656.14.peg.2082"/>
<dbReference type="GO" id="GO:0008409">
    <property type="term" value="F:5'-3' exonuclease activity"/>
    <property type="evidence" value="ECO:0007669"/>
    <property type="project" value="InterPro"/>
</dbReference>
<dbReference type="GO" id="GO:0017108">
    <property type="term" value="F:5'-flap endonuclease activity"/>
    <property type="evidence" value="ECO:0007669"/>
    <property type="project" value="UniProtKB-UniRule"/>
</dbReference>
<dbReference type="GO" id="GO:0003677">
    <property type="term" value="F:DNA binding"/>
    <property type="evidence" value="ECO:0007669"/>
    <property type="project" value="UniProtKB-UniRule"/>
</dbReference>
<dbReference type="GO" id="GO:0000287">
    <property type="term" value="F:magnesium ion binding"/>
    <property type="evidence" value="ECO:0007669"/>
    <property type="project" value="UniProtKB-UniRule"/>
</dbReference>
<dbReference type="GO" id="GO:0030955">
    <property type="term" value="F:potassium ion binding"/>
    <property type="evidence" value="ECO:0007669"/>
    <property type="project" value="UniProtKB-UniRule"/>
</dbReference>
<dbReference type="GO" id="GO:0033567">
    <property type="term" value="P:DNA replication, Okazaki fragment processing"/>
    <property type="evidence" value="ECO:0007669"/>
    <property type="project" value="UniProtKB-UniRule"/>
</dbReference>
<dbReference type="CDD" id="cd09898">
    <property type="entry name" value="H3TH_53EXO"/>
    <property type="match status" value="1"/>
</dbReference>
<dbReference type="CDD" id="cd09859">
    <property type="entry name" value="PIN_53EXO"/>
    <property type="match status" value="1"/>
</dbReference>
<dbReference type="FunFam" id="1.10.150.20:FF:000003">
    <property type="entry name" value="DNA polymerase I"/>
    <property type="match status" value="1"/>
</dbReference>
<dbReference type="FunFam" id="3.40.50.1010:FF:000011">
    <property type="entry name" value="Flap endonuclease Xni"/>
    <property type="match status" value="1"/>
</dbReference>
<dbReference type="Gene3D" id="1.10.150.20">
    <property type="entry name" value="5' to 3' exonuclease, C-terminal subdomain"/>
    <property type="match status" value="1"/>
</dbReference>
<dbReference type="Gene3D" id="3.40.50.1010">
    <property type="entry name" value="5'-nuclease"/>
    <property type="match status" value="1"/>
</dbReference>
<dbReference type="HAMAP" id="MF_01192">
    <property type="entry name" value="Xni"/>
    <property type="match status" value="1"/>
</dbReference>
<dbReference type="InterPro" id="IPR020046">
    <property type="entry name" value="5-3_exonucl_a-hlix_arch_N"/>
</dbReference>
<dbReference type="InterPro" id="IPR002421">
    <property type="entry name" value="5-3_exonuclease"/>
</dbReference>
<dbReference type="InterPro" id="IPR036279">
    <property type="entry name" value="5-3_exonuclease_C_sf"/>
</dbReference>
<dbReference type="InterPro" id="IPR020045">
    <property type="entry name" value="DNA_polI_H3TH"/>
</dbReference>
<dbReference type="InterPro" id="IPR038969">
    <property type="entry name" value="FEN"/>
</dbReference>
<dbReference type="InterPro" id="IPR008918">
    <property type="entry name" value="HhH2"/>
</dbReference>
<dbReference type="InterPro" id="IPR029060">
    <property type="entry name" value="PIN-like_dom_sf"/>
</dbReference>
<dbReference type="InterPro" id="IPR022895">
    <property type="entry name" value="Xni"/>
</dbReference>
<dbReference type="NCBIfam" id="NF007017">
    <property type="entry name" value="PRK09482.1"/>
    <property type="match status" value="1"/>
</dbReference>
<dbReference type="PANTHER" id="PTHR42646:SF2">
    <property type="entry name" value="5'-3' EXONUCLEASE FAMILY PROTEIN"/>
    <property type="match status" value="1"/>
</dbReference>
<dbReference type="PANTHER" id="PTHR42646">
    <property type="entry name" value="FLAP ENDONUCLEASE XNI"/>
    <property type="match status" value="1"/>
</dbReference>
<dbReference type="Pfam" id="PF01367">
    <property type="entry name" value="5_3_exonuc"/>
    <property type="match status" value="1"/>
</dbReference>
<dbReference type="Pfam" id="PF02739">
    <property type="entry name" value="5_3_exonuc_N"/>
    <property type="match status" value="1"/>
</dbReference>
<dbReference type="SMART" id="SM00475">
    <property type="entry name" value="53EXOc"/>
    <property type="match status" value="1"/>
</dbReference>
<dbReference type="SMART" id="SM00279">
    <property type="entry name" value="HhH2"/>
    <property type="match status" value="1"/>
</dbReference>
<dbReference type="SUPFAM" id="SSF47807">
    <property type="entry name" value="5' to 3' exonuclease, C-terminal subdomain"/>
    <property type="match status" value="1"/>
</dbReference>
<dbReference type="SUPFAM" id="SSF88723">
    <property type="entry name" value="PIN domain-like"/>
    <property type="match status" value="1"/>
</dbReference>